<sequence>MIELWPAIDLIGSTSVRLTEGKYDSEEKMSRSAEESIAYYSQFECVNRIHIVDLIGAKAQHAREFDYIKSLRRLTTKDIEVGGGIRTKSQIMDYFAAGINYCIVGTKGIQDTDWLKEMAHTFPGRIYLSVDAYGEDIKVNGWEEDTELNLFSFVRRLSDIPLGGIIYTDIAKDGKMSGPNFELTGQLVKATTIPVIASGGIRHQQDIQRLASLNVHAAIIGKAAHQASFWEGLK</sequence>
<keyword id="KW-0028">Amino-acid biosynthesis</keyword>
<keyword id="KW-0963">Cytoplasm</keyword>
<keyword id="KW-0368">Histidine biosynthesis</keyword>
<keyword id="KW-0413">Isomerase</keyword>
<keyword id="KW-1185">Reference proteome</keyword>
<dbReference type="EC" id="5.3.1.16" evidence="1"/>
<dbReference type="EMBL" id="CP000253">
    <property type="protein sequence ID" value="ABD31995.1"/>
    <property type="molecule type" value="Genomic_DNA"/>
</dbReference>
<dbReference type="RefSeq" id="WP_000571736.1">
    <property type="nucleotide sequence ID" value="NZ_LS483365.1"/>
</dbReference>
<dbReference type="RefSeq" id="YP_501458.1">
    <property type="nucleotide sequence ID" value="NC_007795.1"/>
</dbReference>
<dbReference type="SMR" id="Q2FUU2"/>
<dbReference type="STRING" id="93061.SAOUHSC_03009"/>
<dbReference type="PaxDb" id="1280-SAXN108_2948"/>
<dbReference type="GeneID" id="3921490"/>
<dbReference type="KEGG" id="sao:SAOUHSC_03009"/>
<dbReference type="PATRIC" id="fig|93061.5.peg.2717"/>
<dbReference type="eggNOG" id="COG0106">
    <property type="taxonomic scope" value="Bacteria"/>
</dbReference>
<dbReference type="HOGENOM" id="CLU_048577_1_2_9"/>
<dbReference type="OrthoDB" id="9807749at2"/>
<dbReference type="UniPathway" id="UPA00031">
    <property type="reaction ID" value="UER00009"/>
</dbReference>
<dbReference type="PRO" id="PR:Q2FUU2"/>
<dbReference type="Proteomes" id="UP000008816">
    <property type="component" value="Chromosome"/>
</dbReference>
<dbReference type="GO" id="GO:0005737">
    <property type="term" value="C:cytoplasm"/>
    <property type="evidence" value="ECO:0000318"/>
    <property type="project" value="GO_Central"/>
</dbReference>
<dbReference type="GO" id="GO:0003949">
    <property type="term" value="F:1-(5-phosphoribosyl)-5-[(5-phosphoribosylamino)methylideneamino]imidazole-4-carboxamide isomerase activity"/>
    <property type="evidence" value="ECO:0000318"/>
    <property type="project" value="GO_Central"/>
</dbReference>
<dbReference type="GO" id="GO:0000105">
    <property type="term" value="P:L-histidine biosynthetic process"/>
    <property type="evidence" value="ECO:0000318"/>
    <property type="project" value="GO_Central"/>
</dbReference>
<dbReference type="CDD" id="cd04732">
    <property type="entry name" value="HisA"/>
    <property type="match status" value="1"/>
</dbReference>
<dbReference type="FunFam" id="3.20.20.70:FF:000213">
    <property type="entry name" value="1-(5-phosphoribosyl)-5-[(5-phosphoribosylamino)methylideneamino] imidazole-4-carboxamide isomerase"/>
    <property type="match status" value="1"/>
</dbReference>
<dbReference type="Gene3D" id="3.20.20.70">
    <property type="entry name" value="Aldolase class I"/>
    <property type="match status" value="1"/>
</dbReference>
<dbReference type="HAMAP" id="MF_01014">
    <property type="entry name" value="HisA"/>
    <property type="match status" value="1"/>
</dbReference>
<dbReference type="InterPro" id="IPR013785">
    <property type="entry name" value="Aldolase_TIM"/>
</dbReference>
<dbReference type="InterPro" id="IPR006062">
    <property type="entry name" value="His_biosynth"/>
</dbReference>
<dbReference type="InterPro" id="IPR006063">
    <property type="entry name" value="HisA_bact_arch"/>
</dbReference>
<dbReference type="InterPro" id="IPR044524">
    <property type="entry name" value="Isoase_HisA-like"/>
</dbReference>
<dbReference type="InterPro" id="IPR023016">
    <property type="entry name" value="Isoase_HisA-like_bact"/>
</dbReference>
<dbReference type="InterPro" id="IPR011060">
    <property type="entry name" value="RibuloseP-bd_barrel"/>
</dbReference>
<dbReference type="NCBIfam" id="TIGR00007">
    <property type="entry name" value="1-(5-phosphoribosyl)-5-[(5-phosphoribosylamino)methylideneamino]imidazole-4-carboxamide isomerase"/>
    <property type="match status" value="1"/>
</dbReference>
<dbReference type="NCBIfam" id="NF010114">
    <property type="entry name" value="PRK13587.1"/>
    <property type="match status" value="1"/>
</dbReference>
<dbReference type="PANTHER" id="PTHR43090">
    <property type="entry name" value="1-(5-PHOSPHORIBOSYL)-5-[(5-PHOSPHORIBOSYLAMINO)METHYLIDENEAMINO] IMIDAZOLE-4-CARBOXAMIDE ISOMERASE"/>
    <property type="match status" value="1"/>
</dbReference>
<dbReference type="PANTHER" id="PTHR43090:SF2">
    <property type="entry name" value="1-(5-PHOSPHORIBOSYL)-5-[(5-PHOSPHORIBOSYLAMINO)METHYLIDENEAMINO] IMIDAZOLE-4-CARBOXAMIDE ISOMERASE"/>
    <property type="match status" value="1"/>
</dbReference>
<dbReference type="Pfam" id="PF00977">
    <property type="entry name" value="His_biosynth"/>
    <property type="match status" value="1"/>
</dbReference>
<dbReference type="SUPFAM" id="SSF51366">
    <property type="entry name" value="Ribulose-phoshate binding barrel"/>
    <property type="match status" value="1"/>
</dbReference>
<comment type="catalytic activity">
    <reaction evidence="1">
        <text>1-(5-phospho-beta-D-ribosyl)-5-[(5-phospho-beta-D-ribosylamino)methylideneamino]imidazole-4-carboxamide = 5-[(5-phospho-1-deoxy-D-ribulos-1-ylimino)methylamino]-1-(5-phospho-beta-D-ribosyl)imidazole-4-carboxamide</text>
        <dbReference type="Rhea" id="RHEA:15469"/>
        <dbReference type="ChEBI" id="CHEBI:58435"/>
        <dbReference type="ChEBI" id="CHEBI:58525"/>
        <dbReference type="EC" id="5.3.1.16"/>
    </reaction>
</comment>
<comment type="pathway">
    <text evidence="1">Amino-acid biosynthesis; L-histidine biosynthesis; L-histidine from 5-phospho-alpha-D-ribose 1-diphosphate: step 4/9.</text>
</comment>
<comment type="subcellular location">
    <subcellularLocation>
        <location evidence="1">Cytoplasm</location>
    </subcellularLocation>
</comment>
<comment type="similarity">
    <text evidence="1">Belongs to the HisA/HisF family.</text>
</comment>
<name>HIS4_STAA8</name>
<proteinExistence type="inferred from homology"/>
<accession>Q2FUU2</accession>
<protein>
    <recommendedName>
        <fullName evidence="1">1-(5-phosphoribosyl)-5-[(5-phosphoribosylamino)methylideneamino] imidazole-4-carboxamide isomerase</fullName>
        <ecNumber evidence="1">5.3.1.16</ecNumber>
    </recommendedName>
    <alternativeName>
        <fullName evidence="1">Phosphoribosylformimino-5-aminoimidazole carboxamide ribotide isomerase</fullName>
    </alternativeName>
</protein>
<feature type="chain" id="PRO_0000290547" description="1-(5-phosphoribosyl)-5-[(5-phosphoribosylamino)methylideneamino] imidazole-4-carboxamide isomerase">
    <location>
        <begin position="1"/>
        <end position="234"/>
    </location>
</feature>
<feature type="active site" description="Proton acceptor" evidence="1">
    <location>
        <position position="9"/>
    </location>
</feature>
<feature type="active site" description="Proton donor" evidence="1">
    <location>
        <position position="131"/>
    </location>
</feature>
<gene>
    <name evidence="1" type="primary">hisA</name>
    <name type="ordered locus">SAOUHSC_03009</name>
</gene>
<evidence type="ECO:0000255" key="1">
    <source>
        <dbReference type="HAMAP-Rule" id="MF_01014"/>
    </source>
</evidence>
<organism>
    <name type="scientific">Staphylococcus aureus (strain NCTC 8325 / PS 47)</name>
    <dbReference type="NCBI Taxonomy" id="93061"/>
    <lineage>
        <taxon>Bacteria</taxon>
        <taxon>Bacillati</taxon>
        <taxon>Bacillota</taxon>
        <taxon>Bacilli</taxon>
        <taxon>Bacillales</taxon>
        <taxon>Staphylococcaceae</taxon>
        <taxon>Staphylococcus</taxon>
    </lineage>
</organism>
<reference key="1">
    <citation type="book" date="2006" name="Gram positive pathogens, 2nd edition">
        <title>The Staphylococcus aureus NCTC 8325 genome.</title>
        <editorList>
            <person name="Fischetti V."/>
            <person name="Novick R."/>
            <person name="Ferretti J."/>
            <person name="Portnoy D."/>
            <person name="Rood J."/>
        </editorList>
        <authorList>
            <person name="Gillaspy A.F."/>
            <person name="Worrell V."/>
            <person name="Orvis J."/>
            <person name="Roe B.A."/>
            <person name="Dyer D.W."/>
            <person name="Iandolo J.J."/>
        </authorList>
    </citation>
    <scope>NUCLEOTIDE SEQUENCE [LARGE SCALE GENOMIC DNA]</scope>
    <source>
        <strain>NCTC 8325 / PS 47</strain>
    </source>
</reference>